<organism>
    <name type="scientific">Yersinia pestis bv. Antiqua (strain Antiqua)</name>
    <dbReference type="NCBI Taxonomy" id="360102"/>
    <lineage>
        <taxon>Bacteria</taxon>
        <taxon>Pseudomonadati</taxon>
        <taxon>Pseudomonadota</taxon>
        <taxon>Gammaproteobacteria</taxon>
        <taxon>Enterobacterales</taxon>
        <taxon>Yersiniaceae</taxon>
        <taxon>Yersinia</taxon>
    </lineage>
</organism>
<evidence type="ECO:0000255" key="1">
    <source>
        <dbReference type="HAMAP-Rule" id="MF_01618"/>
    </source>
</evidence>
<protein>
    <recommendedName>
        <fullName evidence="1">3-ketoacyl-CoA thiolase</fullName>
        <ecNumber evidence="1">2.3.1.16</ecNumber>
    </recommendedName>
    <alternativeName>
        <fullName evidence="1">ACSs</fullName>
    </alternativeName>
    <alternativeName>
        <fullName evidence="1">Acetyl-CoA acyltransferase</fullName>
    </alternativeName>
    <alternativeName>
        <fullName evidence="1">Acyl-CoA ligase</fullName>
    </alternativeName>
    <alternativeName>
        <fullName evidence="1">Beta-ketothiolase</fullName>
    </alternativeName>
    <alternativeName>
        <fullName evidence="1">Fatty acid oxidation complex subunit beta</fullName>
    </alternativeName>
</protein>
<dbReference type="EC" id="2.3.1.16" evidence="1"/>
<dbReference type="EMBL" id="CP000308">
    <property type="protein sequence ID" value="ABG14063.1"/>
    <property type="molecule type" value="Genomic_DNA"/>
</dbReference>
<dbReference type="RefSeq" id="WP_002209704.1">
    <property type="nucleotide sequence ID" value="NZ_CP009906.1"/>
</dbReference>
<dbReference type="SMR" id="Q1C659"/>
<dbReference type="GeneID" id="57975943"/>
<dbReference type="KEGG" id="ypa:YPA_2098"/>
<dbReference type="UniPathway" id="UPA00659"/>
<dbReference type="Proteomes" id="UP000001971">
    <property type="component" value="Chromosome"/>
</dbReference>
<dbReference type="GO" id="GO:0005829">
    <property type="term" value="C:cytosol"/>
    <property type="evidence" value="ECO:0007669"/>
    <property type="project" value="TreeGrafter"/>
</dbReference>
<dbReference type="GO" id="GO:0003988">
    <property type="term" value="F:acetyl-CoA C-acyltransferase activity"/>
    <property type="evidence" value="ECO:0007669"/>
    <property type="project" value="UniProtKB-UniRule"/>
</dbReference>
<dbReference type="GO" id="GO:0006635">
    <property type="term" value="P:fatty acid beta-oxidation"/>
    <property type="evidence" value="ECO:0007669"/>
    <property type="project" value="UniProtKB-UniRule"/>
</dbReference>
<dbReference type="CDD" id="cd00751">
    <property type="entry name" value="thiolase"/>
    <property type="match status" value="1"/>
</dbReference>
<dbReference type="FunFam" id="3.40.47.10:FF:000011">
    <property type="entry name" value="3-ketoacyl-CoA thiolase"/>
    <property type="match status" value="1"/>
</dbReference>
<dbReference type="Gene3D" id="3.40.47.10">
    <property type="match status" value="1"/>
</dbReference>
<dbReference type="HAMAP" id="MF_01618">
    <property type="entry name" value="FadI"/>
    <property type="match status" value="1"/>
</dbReference>
<dbReference type="InterPro" id="IPR012806">
    <property type="entry name" value="Ac-CoA_C-AcTrfase_FadI"/>
</dbReference>
<dbReference type="InterPro" id="IPR002155">
    <property type="entry name" value="Thiolase"/>
</dbReference>
<dbReference type="InterPro" id="IPR016039">
    <property type="entry name" value="Thiolase-like"/>
</dbReference>
<dbReference type="InterPro" id="IPR020615">
    <property type="entry name" value="Thiolase_acyl_enz_int_AS"/>
</dbReference>
<dbReference type="InterPro" id="IPR020610">
    <property type="entry name" value="Thiolase_AS"/>
</dbReference>
<dbReference type="InterPro" id="IPR020617">
    <property type="entry name" value="Thiolase_C"/>
</dbReference>
<dbReference type="InterPro" id="IPR020613">
    <property type="entry name" value="Thiolase_CS"/>
</dbReference>
<dbReference type="InterPro" id="IPR020616">
    <property type="entry name" value="Thiolase_N"/>
</dbReference>
<dbReference type="NCBIfam" id="TIGR01930">
    <property type="entry name" value="AcCoA-C-Actrans"/>
    <property type="match status" value="1"/>
</dbReference>
<dbReference type="NCBIfam" id="TIGR02446">
    <property type="entry name" value="FadI"/>
    <property type="match status" value="1"/>
</dbReference>
<dbReference type="NCBIfam" id="NF006516">
    <property type="entry name" value="PRK08963.1"/>
    <property type="match status" value="1"/>
</dbReference>
<dbReference type="PANTHER" id="PTHR18919:SF107">
    <property type="entry name" value="ACETYL-COA ACETYLTRANSFERASE, CYTOSOLIC"/>
    <property type="match status" value="1"/>
</dbReference>
<dbReference type="PANTHER" id="PTHR18919">
    <property type="entry name" value="ACETYL-COA C-ACYLTRANSFERASE"/>
    <property type="match status" value="1"/>
</dbReference>
<dbReference type="Pfam" id="PF02803">
    <property type="entry name" value="Thiolase_C"/>
    <property type="match status" value="1"/>
</dbReference>
<dbReference type="Pfam" id="PF00108">
    <property type="entry name" value="Thiolase_N"/>
    <property type="match status" value="1"/>
</dbReference>
<dbReference type="PIRSF" id="PIRSF000429">
    <property type="entry name" value="Ac-CoA_Ac_transf"/>
    <property type="match status" value="1"/>
</dbReference>
<dbReference type="SUPFAM" id="SSF53901">
    <property type="entry name" value="Thiolase-like"/>
    <property type="match status" value="2"/>
</dbReference>
<dbReference type="PROSITE" id="PS00098">
    <property type="entry name" value="THIOLASE_1"/>
    <property type="match status" value="1"/>
</dbReference>
<dbReference type="PROSITE" id="PS00737">
    <property type="entry name" value="THIOLASE_2"/>
    <property type="match status" value="1"/>
</dbReference>
<dbReference type="PROSITE" id="PS00099">
    <property type="entry name" value="THIOLASE_3"/>
    <property type="match status" value="1"/>
</dbReference>
<comment type="function">
    <text evidence="1">Catalyzes the final step of fatty acid oxidation in which acetyl-CoA is released and the CoA ester of a fatty acid two carbons shorter is formed.</text>
</comment>
<comment type="catalytic activity">
    <reaction evidence="1">
        <text>an acyl-CoA + acetyl-CoA = a 3-oxoacyl-CoA + CoA</text>
        <dbReference type="Rhea" id="RHEA:21564"/>
        <dbReference type="ChEBI" id="CHEBI:57287"/>
        <dbReference type="ChEBI" id="CHEBI:57288"/>
        <dbReference type="ChEBI" id="CHEBI:58342"/>
        <dbReference type="ChEBI" id="CHEBI:90726"/>
        <dbReference type="EC" id="2.3.1.16"/>
    </reaction>
</comment>
<comment type="pathway">
    <text evidence="1">Lipid metabolism; fatty acid beta-oxidation.</text>
</comment>
<comment type="subunit">
    <text evidence="1">Heterotetramer of two alpha chains (FadJ) and two beta chains (FadI).</text>
</comment>
<comment type="subcellular location">
    <subcellularLocation>
        <location evidence="1">Cytoplasm</location>
    </subcellularLocation>
</comment>
<comment type="similarity">
    <text evidence="1">Belongs to the thiolase-like superfamily. Thiolase family.</text>
</comment>
<proteinExistence type="inferred from homology"/>
<gene>
    <name evidence="1" type="primary">fadI</name>
    <name type="ordered locus">YPA_2098</name>
</gene>
<feature type="chain" id="PRO_1000069523" description="3-ketoacyl-CoA thiolase">
    <location>
        <begin position="1"/>
        <end position="436"/>
    </location>
</feature>
<feature type="active site" description="Acyl-thioester intermediate" evidence="1">
    <location>
        <position position="99"/>
    </location>
</feature>
<feature type="active site" description="Proton acceptor" evidence="1">
    <location>
        <position position="392"/>
    </location>
</feature>
<feature type="active site" description="Proton acceptor" evidence="1">
    <location>
        <position position="422"/>
    </location>
</feature>
<name>FADI_YERPA</name>
<sequence>MSKPLPLVTRQGDRIVIVNGLRTPFAKQATAYHGVPAVDLGKIVVSELLARSGISSELIDQLVFGQVVQMPEAPNIAREIVLGTGMSVHTDAYSVSRACATSFQAVANVAESIIAGSVDIAIAGGADSSSVLPIGVSKALARTLVDANKARSLSQKLKLFSRLRLRDLLPVAPAVAEYSTGLRMGDTAEQMAKTYGISREDQDALALRSHQLAAEAWQQGWLHDEVMTAYIPPYREAIIEDNNIRKDSTLAQYAKLRPAFDRQHGSVTAANSTPLTDGAAAVLMMSESKAKALGLPPLGYLRSFAFSAIDVWQDMLLGPSYATPLALDRAGITLADLTLIDMHEAFAAQTLANLKMFASDTFAREKLGRSQAIGEVDMSKFNVLGGSIAYGHPFAATGARMITQTLNELRRRGGGLGLTTACAAGGLGAAMILEVE</sequence>
<keyword id="KW-0012">Acyltransferase</keyword>
<keyword id="KW-0963">Cytoplasm</keyword>
<keyword id="KW-0276">Fatty acid metabolism</keyword>
<keyword id="KW-0442">Lipid degradation</keyword>
<keyword id="KW-0443">Lipid metabolism</keyword>
<keyword id="KW-0808">Transferase</keyword>
<reference key="1">
    <citation type="journal article" date="2006" name="J. Bacteriol.">
        <title>Complete genome sequence of Yersinia pestis strains Antiqua and Nepal516: evidence of gene reduction in an emerging pathogen.</title>
        <authorList>
            <person name="Chain P.S.G."/>
            <person name="Hu P."/>
            <person name="Malfatti S.A."/>
            <person name="Radnedge L."/>
            <person name="Larimer F."/>
            <person name="Vergez L.M."/>
            <person name="Worsham P."/>
            <person name="Chu M.C."/>
            <person name="Andersen G.L."/>
        </authorList>
    </citation>
    <scope>NUCLEOTIDE SEQUENCE [LARGE SCALE GENOMIC DNA]</scope>
    <source>
        <strain>Antiqua</strain>
    </source>
</reference>
<accession>Q1C659</accession>